<protein>
    <recommendedName>
        <fullName evidence="1">Ribonuclease BN</fullName>
        <shortName evidence="1">RNase BN</shortName>
        <ecNumber evidence="1">3.1.-.-</ecNumber>
    </recommendedName>
    <alternativeName>
        <fullName evidence="1">Ribonuclease Z homolog</fullName>
        <shortName evidence="1">RNase Z homolog</shortName>
    </alternativeName>
</protein>
<gene>
    <name evidence="1" type="primary">rbn</name>
    <name type="synonym">rnz</name>
    <name type="ordered locus">KPN78578_26210</name>
    <name type="ORF">KPN_02665</name>
</gene>
<reference key="1">
    <citation type="submission" date="2006-09" db="EMBL/GenBank/DDBJ databases">
        <authorList>
            <consortium name="The Klebsiella pneumonia Genome Sequencing Project"/>
            <person name="McClelland M."/>
            <person name="Sanderson E.K."/>
            <person name="Spieth J."/>
            <person name="Clifton W.S."/>
            <person name="Latreille P."/>
            <person name="Sabo A."/>
            <person name="Pepin K."/>
            <person name="Bhonagiri V."/>
            <person name="Porwollik S."/>
            <person name="Ali J."/>
            <person name="Wilson R.K."/>
        </authorList>
    </citation>
    <scope>NUCLEOTIDE SEQUENCE [LARGE SCALE GENOMIC DNA]</scope>
    <source>
        <strain>ATCC 700721 / MGH 78578</strain>
    </source>
</reference>
<sequence>MELTFLGTSAGVPTRTRNMTSIILNLQQPTRAEMWLFDCGEGTQHQFLHTPYHPGKLNKIFITHLHGDHLFGLPGLLCSRSMQGNSLPLTLYGPKGLKEFVETALRLSGSWTDYPLTIIEVGPGLVFDEEGYRVTAYPLSHPVECYGYRIAQHDKPGTLDAAQLIADGVPPGPLFHQLKRGQRVELADGRVIDGSRYLGPSTPGKTLAIFGDTAPCPQALEMARGADVMVHETTLEQAMAEKANSRGHSSSQQTAALAKEAGVGTLIATHFSSRYDAEGCLRMLAECREIFPNTLLAEDFMVYKMA</sequence>
<dbReference type="EC" id="3.1.-.-" evidence="1"/>
<dbReference type="EMBL" id="CP000647">
    <property type="protein sequence ID" value="ABR78082.1"/>
    <property type="molecule type" value="Genomic_DNA"/>
</dbReference>
<dbReference type="RefSeq" id="WP_015958759.1">
    <property type="nucleotide sequence ID" value="NC_009648.1"/>
</dbReference>
<dbReference type="SMR" id="A6TBW1"/>
<dbReference type="STRING" id="272620.KPN_02665"/>
<dbReference type="PaxDb" id="272620-KPN_02665"/>
<dbReference type="EnsemblBacteria" id="ABR78082">
    <property type="protein sequence ID" value="ABR78082"/>
    <property type="gene ID" value="KPN_02665"/>
</dbReference>
<dbReference type="KEGG" id="kpn:KPN_02665"/>
<dbReference type="HOGENOM" id="CLU_031317_2_0_6"/>
<dbReference type="Proteomes" id="UP000000265">
    <property type="component" value="Chromosome"/>
</dbReference>
<dbReference type="GO" id="GO:0042781">
    <property type="term" value="F:3'-tRNA processing endoribonuclease activity"/>
    <property type="evidence" value="ECO:0007669"/>
    <property type="project" value="TreeGrafter"/>
</dbReference>
<dbReference type="GO" id="GO:0004527">
    <property type="term" value="F:exonuclease activity"/>
    <property type="evidence" value="ECO:0007669"/>
    <property type="project" value="UniProtKB-UniRule"/>
</dbReference>
<dbReference type="GO" id="GO:0008270">
    <property type="term" value="F:zinc ion binding"/>
    <property type="evidence" value="ECO:0007669"/>
    <property type="project" value="UniProtKB-UniRule"/>
</dbReference>
<dbReference type="CDD" id="cd07717">
    <property type="entry name" value="RNaseZ_ZiPD-like_MBL-fold"/>
    <property type="match status" value="1"/>
</dbReference>
<dbReference type="FunFam" id="3.60.15.10:FF:000002">
    <property type="entry name" value="Ribonuclease Z"/>
    <property type="match status" value="1"/>
</dbReference>
<dbReference type="Gene3D" id="3.60.15.10">
    <property type="entry name" value="Ribonuclease Z/Hydroxyacylglutathione hydrolase-like"/>
    <property type="match status" value="1"/>
</dbReference>
<dbReference type="HAMAP" id="MF_01818">
    <property type="entry name" value="RNase_Z_BN"/>
    <property type="match status" value="1"/>
</dbReference>
<dbReference type="InterPro" id="IPR001279">
    <property type="entry name" value="Metallo-B-lactamas"/>
</dbReference>
<dbReference type="InterPro" id="IPR036866">
    <property type="entry name" value="RibonucZ/Hydroxyglut_hydro"/>
</dbReference>
<dbReference type="InterPro" id="IPR013471">
    <property type="entry name" value="RNase_Z/BN"/>
</dbReference>
<dbReference type="NCBIfam" id="NF000800">
    <property type="entry name" value="PRK00055.1-1"/>
    <property type="match status" value="1"/>
</dbReference>
<dbReference type="NCBIfam" id="NF000801">
    <property type="entry name" value="PRK00055.1-3"/>
    <property type="match status" value="1"/>
</dbReference>
<dbReference type="NCBIfam" id="TIGR02651">
    <property type="entry name" value="RNase_Z"/>
    <property type="match status" value="1"/>
</dbReference>
<dbReference type="PANTHER" id="PTHR46018">
    <property type="entry name" value="ZINC PHOSPHODIESTERASE ELAC PROTEIN 1"/>
    <property type="match status" value="1"/>
</dbReference>
<dbReference type="PANTHER" id="PTHR46018:SF2">
    <property type="entry name" value="ZINC PHOSPHODIESTERASE ELAC PROTEIN 1"/>
    <property type="match status" value="1"/>
</dbReference>
<dbReference type="Pfam" id="PF12706">
    <property type="entry name" value="Lactamase_B_2"/>
    <property type="match status" value="1"/>
</dbReference>
<dbReference type="SUPFAM" id="SSF56281">
    <property type="entry name" value="Metallo-hydrolase/oxidoreductase"/>
    <property type="match status" value="1"/>
</dbReference>
<name>RBN_KLEP7</name>
<comment type="function">
    <text evidence="1">Zinc phosphodiesterase, which has both exoribonuclease and endoribonuclease activities.</text>
</comment>
<comment type="cofactor">
    <cofactor evidence="1">
        <name>Zn(2+)</name>
        <dbReference type="ChEBI" id="CHEBI:29105"/>
    </cofactor>
    <text evidence="1">Binds 2 Zn(2+) ions.</text>
</comment>
<comment type="subunit">
    <text evidence="1">Homodimer.</text>
</comment>
<comment type="similarity">
    <text evidence="1">Belongs to the RNase Z family. RNase BN subfamily.</text>
</comment>
<accession>A6TBW1</accession>
<keyword id="KW-0255">Endonuclease</keyword>
<keyword id="KW-0269">Exonuclease</keyword>
<keyword id="KW-0378">Hydrolase</keyword>
<keyword id="KW-0479">Metal-binding</keyword>
<keyword id="KW-0540">Nuclease</keyword>
<keyword id="KW-0819">tRNA processing</keyword>
<keyword id="KW-0862">Zinc</keyword>
<feature type="chain" id="PRO_1000070283" description="Ribonuclease BN">
    <location>
        <begin position="1"/>
        <end position="306"/>
    </location>
</feature>
<feature type="active site" description="Proton acceptor" evidence="1">
    <location>
        <position position="68"/>
    </location>
</feature>
<feature type="binding site" evidence="1">
    <location>
        <position position="64"/>
    </location>
    <ligand>
        <name>Zn(2+)</name>
        <dbReference type="ChEBI" id="CHEBI:29105"/>
        <label>1</label>
        <note>catalytic</note>
    </ligand>
</feature>
<feature type="binding site" evidence="1">
    <location>
        <position position="66"/>
    </location>
    <ligand>
        <name>Zn(2+)</name>
        <dbReference type="ChEBI" id="CHEBI:29105"/>
        <label>1</label>
        <note>catalytic</note>
    </ligand>
</feature>
<feature type="binding site" evidence="1">
    <location>
        <position position="68"/>
    </location>
    <ligand>
        <name>Zn(2+)</name>
        <dbReference type="ChEBI" id="CHEBI:29105"/>
        <label>2</label>
        <note>catalytic</note>
    </ligand>
</feature>
<feature type="binding site" evidence="1">
    <location>
        <position position="69"/>
    </location>
    <ligand>
        <name>Zn(2+)</name>
        <dbReference type="ChEBI" id="CHEBI:29105"/>
        <label>2</label>
        <note>catalytic</note>
    </ligand>
</feature>
<feature type="binding site" evidence="1">
    <location>
        <position position="141"/>
    </location>
    <ligand>
        <name>Zn(2+)</name>
        <dbReference type="ChEBI" id="CHEBI:29105"/>
        <label>1</label>
        <note>catalytic</note>
    </ligand>
</feature>
<feature type="binding site" evidence="1">
    <location>
        <position position="212"/>
    </location>
    <ligand>
        <name>Zn(2+)</name>
        <dbReference type="ChEBI" id="CHEBI:29105"/>
        <label>1</label>
        <note>catalytic</note>
    </ligand>
</feature>
<feature type="binding site" evidence="1">
    <location>
        <position position="212"/>
    </location>
    <ligand>
        <name>Zn(2+)</name>
        <dbReference type="ChEBI" id="CHEBI:29105"/>
        <label>2</label>
        <note>catalytic</note>
    </ligand>
</feature>
<feature type="binding site" evidence="1">
    <location>
        <position position="270"/>
    </location>
    <ligand>
        <name>Zn(2+)</name>
        <dbReference type="ChEBI" id="CHEBI:29105"/>
        <label>2</label>
        <note>catalytic</note>
    </ligand>
</feature>
<evidence type="ECO:0000255" key="1">
    <source>
        <dbReference type="HAMAP-Rule" id="MF_01818"/>
    </source>
</evidence>
<organism>
    <name type="scientific">Klebsiella pneumoniae subsp. pneumoniae (strain ATCC 700721 / MGH 78578)</name>
    <dbReference type="NCBI Taxonomy" id="272620"/>
    <lineage>
        <taxon>Bacteria</taxon>
        <taxon>Pseudomonadati</taxon>
        <taxon>Pseudomonadota</taxon>
        <taxon>Gammaproteobacteria</taxon>
        <taxon>Enterobacterales</taxon>
        <taxon>Enterobacteriaceae</taxon>
        <taxon>Klebsiella/Raoultella group</taxon>
        <taxon>Klebsiella</taxon>
        <taxon>Klebsiella pneumoniae complex</taxon>
    </lineage>
</organism>
<proteinExistence type="inferred from homology"/>